<proteinExistence type="inferred from homology"/>
<organism>
    <name type="scientific">Shewanella amazonensis (strain ATCC BAA-1098 / SB2B)</name>
    <dbReference type="NCBI Taxonomy" id="326297"/>
    <lineage>
        <taxon>Bacteria</taxon>
        <taxon>Pseudomonadati</taxon>
        <taxon>Pseudomonadota</taxon>
        <taxon>Gammaproteobacteria</taxon>
        <taxon>Alteromonadales</taxon>
        <taxon>Shewanellaceae</taxon>
        <taxon>Shewanella</taxon>
    </lineage>
</organism>
<reference key="1">
    <citation type="submission" date="2006-12" db="EMBL/GenBank/DDBJ databases">
        <title>Complete sequence of Shewanella amazonensis SB2B.</title>
        <authorList>
            <consortium name="US DOE Joint Genome Institute"/>
            <person name="Copeland A."/>
            <person name="Lucas S."/>
            <person name="Lapidus A."/>
            <person name="Barry K."/>
            <person name="Detter J.C."/>
            <person name="Glavina del Rio T."/>
            <person name="Hammon N."/>
            <person name="Israni S."/>
            <person name="Dalin E."/>
            <person name="Tice H."/>
            <person name="Pitluck S."/>
            <person name="Munk A.C."/>
            <person name="Brettin T."/>
            <person name="Bruce D."/>
            <person name="Han C."/>
            <person name="Tapia R."/>
            <person name="Gilna P."/>
            <person name="Schmutz J."/>
            <person name="Larimer F."/>
            <person name="Land M."/>
            <person name="Hauser L."/>
            <person name="Kyrpides N."/>
            <person name="Mikhailova N."/>
            <person name="Fredrickson J."/>
            <person name="Richardson P."/>
        </authorList>
    </citation>
    <scope>NUCLEOTIDE SEQUENCE [LARGE SCALE GENOMIC DNA]</scope>
    <source>
        <strain>ATCC BAA-1098 / SB2B</strain>
    </source>
</reference>
<dbReference type="EC" id="6.3.2.-" evidence="1"/>
<dbReference type="EMBL" id="CP000507">
    <property type="protein sequence ID" value="ABM01363.1"/>
    <property type="molecule type" value="Genomic_DNA"/>
</dbReference>
<dbReference type="RefSeq" id="WP_011761267.1">
    <property type="nucleotide sequence ID" value="NC_008700.1"/>
</dbReference>
<dbReference type="SMR" id="A1SAF6"/>
<dbReference type="STRING" id="326297.Sama_3160"/>
<dbReference type="KEGG" id="saz:Sama_3160"/>
<dbReference type="eggNOG" id="COG0189">
    <property type="taxonomic scope" value="Bacteria"/>
</dbReference>
<dbReference type="HOGENOM" id="CLU_054353_0_1_6"/>
<dbReference type="OrthoDB" id="3865600at2"/>
<dbReference type="Proteomes" id="UP000009175">
    <property type="component" value="Chromosome"/>
</dbReference>
<dbReference type="GO" id="GO:0005737">
    <property type="term" value="C:cytoplasm"/>
    <property type="evidence" value="ECO:0007669"/>
    <property type="project" value="TreeGrafter"/>
</dbReference>
<dbReference type="GO" id="GO:0005524">
    <property type="term" value="F:ATP binding"/>
    <property type="evidence" value="ECO:0007669"/>
    <property type="project" value="UniProtKB-UniRule"/>
</dbReference>
<dbReference type="GO" id="GO:0046872">
    <property type="term" value="F:metal ion binding"/>
    <property type="evidence" value="ECO:0007669"/>
    <property type="project" value="UniProtKB-KW"/>
</dbReference>
<dbReference type="GO" id="GO:0018169">
    <property type="term" value="F:ribosomal S6-glutamic acid ligase activity"/>
    <property type="evidence" value="ECO:0007669"/>
    <property type="project" value="TreeGrafter"/>
</dbReference>
<dbReference type="GO" id="GO:0036211">
    <property type="term" value="P:protein modification process"/>
    <property type="evidence" value="ECO:0007669"/>
    <property type="project" value="InterPro"/>
</dbReference>
<dbReference type="GO" id="GO:0009432">
    <property type="term" value="P:SOS response"/>
    <property type="evidence" value="ECO:0007669"/>
    <property type="project" value="TreeGrafter"/>
</dbReference>
<dbReference type="GO" id="GO:0006412">
    <property type="term" value="P:translation"/>
    <property type="evidence" value="ECO:0007669"/>
    <property type="project" value="UniProtKB-KW"/>
</dbReference>
<dbReference type="FunFam" id="3.30.470.20:FF:000058">
    <property type="entry name" value="Alpha-aminoadipate--LysW ligase LysX protein"/>
    <property type="match status" value="1"/>
</dbReference>
<dbReference type="FunFam" id="3.40.50.20:FF:000004">
    <property type="entry name" value="Probable alpha-L-glutamate ligase"/>
    <property type="match status" value="1"/>
</dbReference>
<dbReference type="FunFam" id="3.30.1490.20:FF:000005">
    <property type="entry name" value="Probable alpha-L-glutamate ligase 1"/>
    <property type="match status" value="1"/>
</dbReference>
<dbReference type="Gene3D" id="3.40.50.20">
    <property type="match status" value="1"/>
</dbReference>
<dbReference type="Gene3D" id="3.30.1490.20">
    <property type="entry name" value="ATP-grasp fold, A domain"/>
    <property type="match status" value="1"/>
</dbReference>
<dbReference type="Gene3D" id="3.30.470.20">
    <property type="entry name" value="ATP-grasp fold, B domain"/>
    <property type="match status" value="1"/>
</dbReference>
<dbReference type="HAMAP" id="MF_01552">
    <property type="entry name" value="RimK"/>
    <property type="match status" value="1"/>
</dbReference>
<dbReference type="InterPro" id="IPR011761">
    <property type="entry name" value="ATP-grasp"/>
</dbReference>
<dbReference type="InterPro" id="IPR013651">
    <property type="entry name" value="ATP-grasp_RimK-type"/>
</dbReference>
<dbReference type="InterPro" id="IPR013815">
    <property type="entry name" value="ATP_grasp_subdomain_1"/>
</dbReference>
<dbReference type="InterPro" id="IPR023533">
    <property type="entry name" value="RimK"/>
</dbReference>
<dbReference type="InterPro" id="IPR041107">
    <property type="entry name" value="Rimk_N"/>
</dbReference>
<dbReference type="InterPro" id="IPR004666">
    <property type="entry name" value="Rp_bS6_RimK/Lys_biosynth_LsyX"/>
</dbReference>
<dbReference type="NCBIfam" id="NF007764">
    <property type="entry name" value="PRK10446.1"/>
    <property type="match status" value="1"/>
</dbReference>
<dbReference type="NCBIfam" id="TIGR00768">
    <property type="entry name" value="rimK_fam"/>
    <property type="match status" value="1"/>
</dbReference>
<dbReference type="PANTHER" id="PTHR21621:SF7">
    <property type="entry name" value="RIBOSOMAL PROTEIN BS6--L-GLUTAMATE LIGASE"/>
    <property type="match status" value="1"/>
</dbReference>
<dbReference type="PANTHER" id="PTHR21621">
    <property type="entry name" value="RIBOSOMAL PROTEIN S6 MODIFICATION PROTEIN"/>
    <property type="match status" value="1"/>
</dbReference>
<dbReference type="Pfam" id="PF08443">
    <property type="entry name" value="RimK"/>
    <property type="match status" value="1"/>
</dbReference>
<dbReference type="Pfam" id="PF18030">
    <property type="entry name" value="Rimk_N"/>
    <property type="match status" value="1"/>
</dbReference>
<dbReference type="SUPFAM" id="SSF56059">
    <property type="entry name" value="Glutathione synthetase ATP-binding domain-like"/>
    <property type="match status" value="1"/>
</dbReference>
<dbReference type="PROSITE" id="PS50975">
    <property type="entry name" value="ATP_GRASP"/>
    <property type="match status" value="1"/>
</dbReference>
<sequence length="301" mass="32435">MKIGVLSQFPELYSTRRLVEACESRGHEAWVINPINCYMNINSVKPSIHLEGEEVPMFDAIIPRIHASVTFYGCAVVRQFEMMGVFAANDSISIARSRDKLRALQLLSRKGIGMPVTGFANKPNNIPDLINMVGGAPLVIKLLEGTQGIGVVLAETRKAAESVIEAFLGLKANIMVQEYIKEANGSDIRCFVVGDKVVAAMRRQGPEGDFRSNLHLGGSAEPVKITPQERKSAVAAAKAMGLVVAGVDILRSARGPLVLEVNSAPGIEGIEQATGIKVAEPIVEYIEKVVAARRANHQVIA</sequence>
<evidence type="ECO:0000255" key="1">
    <source>
        <dbReference type="HAMAP-Rule" id="MF_01552"/>
    </source>
</evidence>
<keyword id="KW-0067">ATP-binding</keyword>
<keyword id="KW-0436">Ligase</keyword>
<keyword id="KW-0460">Magnesium</keyword>
<keyword id="KW-0464">Manganese</keyword>
<keyword id="KW-0479">Metal-binding</keyword>
<keyword id="KW-0547">Nucleotide-binding</keyword>
<keyword id="KW-0648">Protein biosynthesis</keyword>
<keyword id="KW-1185">Reference proteome</keyword>
<name>RIMK2_SHEAM</name>
<gene>
    <name evidence="1" type="primary">rimK2</name>
    <name type="ordered locus">Sama_3160</name>
</gene>
<accession>A1SAF6</accession>
<protein>
    <recommendedName>
        <fullName evidence="1">Probable alpha-L-glutamate ligase 2</fullName>
        <ecNumber evidence="1">6.3.2.-</ecNumber>
    </recommendedName>
</protein>
<comment type="cofactor">
    <cofactor evidence="1">
        <name>Mg(2+)</name>
        <dbReference type="ChEBI" id="CHEBI:18420"/>
    </cofactor>
    <cofactor evidence="1">
        <name>Mn(2+)</name>
        <dbReference type="ChEBI" id="CHEBI:29035"/>
    </cofactor>
    <text evidence="1">Binds 2 magnesium or manganese ions per subunit.</text>
</comment>
<comment type="similarity">
    <text evidence="1">Belongs to the RimK family.</text>
</comment>
<feature type="chain" id="PRO_0000340547" description="Probable alpha-L-glutamate ligase 2">
    <location>
        <begin position="1"/>
        <end position="301"/>
    </location>
</feature>
<feature type="domain" description="ATP-grasp" evidence="1">
    <location>
        <begin position="104"/>
        <end position="287"/>
    </location>
</feature>
<feature type="binding site" evidence="1">
    <location>
        <position position="141"/>
    </location>
    <ligand>
        <name>ATP</name>
        <dbReference type="ChEBI" id="CHEBI:30616"/>
    </ligand>
</feature>
<feature type="binding site" evidence="1">
    <location>
        <begin position="178"/>
        <end position="179"/>
    </location>
    <ligand>
        <name>ATP</name>
        <dbReference type="ChEBI" id="CHEBI:30616"/>
    </ligand>
</feature>
<feature type="binding site" evidence="1">
    <location>
        <position position="187"/>
    </location>
    <ligand>
        <name>ATP</name>
        <dbReference type="ChEBI" id="CHEBI:30616"/>
    </ligand>
</feature>
<feature type="binding site" evidence="1">
    <location>
        <begin position="211"/>
        <end position="213"/>
    </location>
    <ligand>
        <name>ATP</name>
        <dbReference type="ChEBI" id="CHEBI:30616"/>
    </ligand>
</feature>
<feature type="binding site" evidence="1">
    <location>
        <position position="248"/>
    </location>
    <ligand>
        <name>Mg(2+)</name>
        <dbReference type="ChEBI" id="CHEBI:18420"/>
        <label>1</label>
    </ligand>
</feature>
<feature type="binding site" evidence="1">
    <location>
        <position position="248"/>
    </location>
    <ligand>
        <name>Mn(2+)</name>
        <dbReference type="ChEBI" id="CHEBI:29035"/>
        <label>1</label>
    </ligand>
</feature>
<feature type="binding site" evidence="1">
    <location>
        <position position="260"/>
    </location>
    <ligand>
        <name>Mg(2+)</name>
        <dbReference type="ChEBI" id="CHEBI:18420"/>
        <label>1</label>
    </ligand>
</feature>
<feature type="binding site" evidence="1">
    <location>
        <position position="260"/>
    </location>
    <ligand>
        <name>Mg(2+)</name>
        <dbReference type="ChEBI" id="CHEBI:18420"/>
        <label>2</label>
    </ligand>
</feature>
<feature type="binding site" evidence="1">
    <location>
        <position position="260"/>
    </location>
    <ligand>
        <name>Mn(2+)</name>
        <dbReference type="ChEBI" id="CHEBI:29035"/>
        <label>1</label>
    </ligand>
</feature>
<feature type="binding site" evidence="1">
    <location>
        <position position="260"/>
    </location>
    <ligand>
        <name>Mn(2+)</name>
        <dbReference type="ChEBI" id="CHEBI:29035"/>
        <label>2</label>
    </ligand>
</feature>
<feature type="binding site" evidence="1">
    <location>
        <position position="262"/>
    </location>
    <ligand>
        <name>Mg(2+)</name>
        <dbReference type="ChEBI" id="CHEBI:18420"/>
        <label>2</label>
    </ligand>
</feature>
<feature type="binding site" evidence="1">
    <location>
        <position position="262"/>
    </location>
    <ligand>
        <name>Mn(2+)</name>
        <dbReference type="ChEBI" id="CHEBI:29035"/>
        <label>2</label>
    </ligand>
</feature>